<protein>
    <recommendedName>
        <fullName evidence="1">Argininosuccinate lyase</fullName>
        <shortName evidence="1">ASAL</shortName>
        <ecNumber evidence="1">4.3.2.1</ecNumber>
    </recommendedName>
    <alternativeName>
        <fullName evidence="1">Arginosuccinase</fullName>
    </alternativeName>
</protein>
<evidence type="ECO:0000255" key="1">
    <source>
        <dbReference type="HAMAP-Rule" id="MF_00006"/>
    </source>
</evidence>
<sequence>MVLYRRWGTEKDFVSTYTSSIDSDKEIVEEVKVVMKAHVIELYLSGYITKDTAKRILLAINSFHELKEGYEDIHEALEDHIIKTVGEEGGWVGFGRSRNDHVATALRLKMRKYLIEILYDIISLRKTLIEKSKTSTEILFPTYTHFQPAQPSTLAHYFLYIEDELDTIWNYIYSSLLLVNRSPLGSGAIVGTNVKLDRKREAELLGFDDIIYNTISATSSRLDLINAVSNLSLLMLFFSRIAEDLILLSSMFINIVKLPDSHVSTSSLMPQKRNAVTLEILRSKAGECFGDLSSLFNIYKGLPSGYNLDLQEMNKHYWDCVKIVNSSIEVINSILEGIEVLNFQLDDKTTATDVAEDLAITGIPYRKAYMEVANKIRAGTFISEISPKTSIYKKAVIGSPNPELINEEIKIKENRIAEEESKLKKYEEKIIGKMNELKVIEDDLIL</sequence>
<proteinExistence type="inferred from homology"/>
<comment type="catalytic activity">
    <reaction evidence="1">
        <text>2-(N(omega)-L-arginino)succinate = fumarate + L-arginine</text>
        <dbReference type="Rhea" id="RHEA:24020"/>
        <dbReference type="ChEBI" id="CHEBI:29806"/>
        <dbReference type="ChEBI" id="CHEBI:32682"/>
        <dbReference type="ChEBI" id="CHEBI:57472"/>
        <dbReference type="EC" id="4.3.2.1"/>
    </reaction>
</comment>
<comment type="pathway">
    <text evidence="1">Amino-acid biosynthesis; L-arginine biosynthesis; L-arginine from L-ornithine and carbamoyl phosphate: step 3/3.</text>
</comment>
<comment type="subcellular location">
    <subcellularLocation>
        <location evidence="1">Cytoplasm</location>
    </subcellularLocation>
</comment>
<comment type="similarity">
    <text evidence="1">Belongs to the lyase 1 family. Argininosuccinate lyase subfamily.</text>
</comment>
<keyword id="KW-0028">Amino-acid biosynthesis</keyword>
<keyword id="KW-0055">Arginine biosynthesis</keyword>
<keyword id="KW-0963">Cytoplasm</keyword>
<keyword id="KW-0456">Lyase</keyword>
<keyword id="KW-1185">Reference proteome</keyword>
<feature type="chain" id="PRO_0000137871" description="Argininosuccinate lyase">
    <location>
        <begin position="1"/>
        <end position="446"/>
    </location>
</feature>
<accession>Q970U9</accession>
<accession>F9VNG1</accession>
<reference key="1">
    <citation type="journal article" date="2001" name="DNA Res.">
        <title>Complete genome sequence of an aerobic thermoacidophilic Crenarchaeon, Sulfolobus tokodaii strain7.</title>
        <authorList>
            <person name="Kawarabayasi Y."/>
            <person name="Hino Y."/>
            <person name="Horikawa H."/>
            <person name="Jin-no K."/>
            <person name="Takahashi M."/>
            <person name="Sekine M."/>
            <person name="Baba S."/>
            <person name="Ankai A."/>
            <person name="Kosugi H."/>
            <person name="Hosoyama A."/>
            <person name="Fukui S."/>
            <person name="Nagai Y."/>
            <person name="Nishijima K."/>
            <person name="Otsuka R."/>
            <person name="Nakazawa H."/>
            <person name="Takamiya M."/>
            <person name="Kato Y."/>
            <person name="Yoshizawa T."/>
            <person name="Tanaka T."/>
            <person name="Kudoh Y."/>
            <person name="Yamazaki J."/>
            <person name="Kushida N."/>
            <person name="Oguchi A."/>
            <person name="Aoki K."/>
            <person name="Masuda S."/>
            <person name="Yanagii M."/>
            <person name="Nishimura M."/>
            <person name="Yamagishi A."/>
            <person name="Oshima T."/>
            <person name="Kikuchi H."/>
        </authorList>
    </citation>
    <scope>NUCLEOTIDE SEQUENCE [LARGE SCALE GENOMIC DNA]</scope>
    <source>
        <strain>DSM 16993 / JCM 10545 / NBRC 100140 / 7</strain>
    </source>
</reference>
<organism>
    <name type="scientific">Sulfurisphaera tokodaii (strain DSM 16993 / JCM 10545 / NBRC 100140 / 7)</name>
    <name type="common">Sulfolobus tokodaii</name>
    <dbReference type="NCBI Taxonomy" id="273063"/>
    <lineage>
        <taxon>Archaea</taxon>
        <taxon>Thermoproteota</taxon>
        <taxon>Thermoprotei</taxon>
        <taxon>Sulfolobales</taxon>
        <taxon>Sulfolobaceae</taxon>
        <taxon>Sulfurisphaera</taxon>
    </lineage>
</organism>
<gene>
    <name evidence="1" type="primary">argH</name>
    <name type="ordered locus">STK_15020</name>
</gene>
<dbReference type="EC" id="4.3.2.1" evidence="1"/>
<dbReference type="EMBL" id="BA000023">
    <property type="protein sequence ID" value="BAK54607.1"/>
    <property type="molecule type" value="Genomic_DNA"/>
</dbReference>
<dbReference type="RefSeq" id="WP_010979552.1">
    <property type="nucleotide sequence ID" value="NC_003106.2"/>
</dbReference>
<dbReference type="SMR" id="Q970U9"/>
<dbReference type="STRING" id="273063.STK_15020"/>
<dbReference type="GeneID" id="1459538"/>
<dbReference type="KEGG" id="sto:STK_15020"/>
<dbReference type="PATRIC" id="fig|273063.9.peg.1710"/>
<dbReference type="eggNOG" id="arCOG01748">
    <property type="taxonomic scope" value="Archaea"/>
</dbReference>
<dbReference type="OrthoDB" id="27337at2157"/>
<dbReference type="UniPathway" id="UPA00068">
    <property type="reaction ID" value="UER00114"/>
</dbReference>
<dbReference type="Proteomes" id="UP000001015">
    <property type="component" value="Chromosome"/>
</dbReference>
<dbReference type="GO" id="GO:0005829">
    <property type="term" value="C:cytosol"/>
    <property type="evidence" value="ECO:0007669"/>
    <property type="project" value="TreeGrafter"/>
</dbReference>
<dbReference type="GO" id="GO:0004056">
    <property type="term" value="F:argininosuccinate lyase activity"/>
    <property type="evidence" value="ECO:0007669"/>
    <property type="project" value="UniProtKB-UniRule"/>
</dbReference>
<dbReference type="GO" id="GO:0042450">
    <property type="term" value="P:arginine biosynthetic process via ornithine"/>
    <property type="evidence" value="ECO:0007669"/>
    <property type="project" value="InterPro"/>
</dbReference>
<dbReference type="GO" id="GO:0006526">
    <property type="term" value="P:L-arginine biosynthetic process"/>
    <property type="evidence" value="ECO:0007669"/>
    <property type="project" value="UniProtKB-UniRule"/>
</dbReference>
<dbReference type="CDD" id="cd01359">
    <property type="entry name" value="Argininosuccinate_lyase"/>
    <property type="match status" value="1"/>
</dbReference>
<dbReference type="Gene3D" id="1.10.40.30">
    <property type="entry name" value="Fumarase/aspartase (C-terminal domain)"/>
    <property type="match status" value="1"/>
</dbReference>
<dbReference type="Gene3D" id="1.20.200.10">
    <property type="entry name" value="Fumarase/aspartase (Central domain)"/>
    <property type="match status" value="1"/>
</dbReference>
<dbReference type="Gene3D" id="1.10.275.10">
    <property type="entry name" value="Fumarase/aspartase (N-terminal domain)"/>
    <property type="match status" value="1"/>
</dbReference>
<dbReference type="HAMAP" id="MF_00006">
    <property type="entry name" value="Arg_succ_lyase"/>
    <property type="match status" value="1"/>
</dbReference>
<dbReference type="InterPro" id="IPR009049">
    <property type="entry name" value="Argininosuccinate_lyase"/>
</dbReference>
<dbReference type="InterPro" id="IPR024083">
    <property type="entry name" value="Fumarase/histidase_N"/>
</dbReference>
<dbReference type="InterPro" id="IPR000362">
    <property type="entry name" value="Fumarate_lyase_fam"/>
</dbReference>
<dbReference type="InterPro" id="IPR022761">
    <property type="entry name" value="Fumarate_lyase_N"/>
</dbReference>
<dbReference type="InterPro" id="IPR008948">
    <property type="entry name" value="L-Aspartase-like"/>
</dbReference>
<dbReference type="NCBIfam" id="TIGR00838">
    <property type="entry name" value="argH"/>
    <property type="match status" value="1"/>
</dbReference>
<dbReference type="PANTHER" id="PTHR43814">
    <property type="entry name" value="ARGININOSUCCINATE LYASE"/>
    <property type="match status" value="1"/>
</dbReference>
<dbReference type="PANTHER" id="PTHR43814:SF1">
    <property type="entry name" value="ARGININOSUCCINATE LYASE"/>
    <property type="match status" value="1"/>
</dbReference>
<dbReference type="Pfam" id="PF00206">
    <property type="entry name" value="Lyase_1"/>
    <property type="match status" value="1"/>
</dbReference>
<dbReference type="PRINTS" id="PR00145">
    <property type="entry name" value="ARGSUCLYASE"/>
</dbReference>
<dbReference type="PRINTS" id="PR00149">
    <property type="entry name" value="FUMRATELYASE"/>
</dbReference>
<dbReference type="SUPFAM" id="SSF48557">
    <property type="entry name" value="L-aspartase-like"/>
    <property type="match status" value="1"/>
</dbReference>
<name>ARLY_SULTO</name>